<dbReference type="EC" id="2.3.3.13" evidence="4"/>
<dbReference type="EMBL" id="CP000077">
    <property type="protein sequence ID" value="AAY80302.1"/>
    <property type="molecule type" value="Genomic_DNA"/>
</dbReference>
<dbReference type="RefSeq" id="WP_011277804.1">
    <property type="nucleotide sequence ID" value="NC_007181.1"/>
</dbReference>
<dbReference type="SMR" id="Q4JA78"/>
<dbReference type="STRING" id="330779.Saci_0940"/>
<dbReference type="GeneID" id="14551451"/>
<dbReference type="KEGG" id="sai:Saci_0940"/>
<dbReference type="PATRIC" id="fig|330779.12.peg.901"/>
<dbReference type="eggNOG" id="arCOG02092">
    <property type="taxonomic scope" value="Archaea"/>
</dbReference>
<dbReference type="HOGENOM" id="CLU_022158_4_2_2"/>
<dbReference type="UniPathway" id="UPA00048">
    <property type="reaction ID" value="UER00070"/>
</dbReference>
<dbReference type="Proteomes" id="UP000001018">
    <property type="component" value="Chromosome"/>
</dbReference>
<dbReference type="GO" id="GO:0003852">
    <property type="term" value="F:2-isopropylmalate synthase activity"/>
    <property type="evidence" value="ECO:0007669"/>
    <property type="project" value="UniProtKB-EC"/>
</dbReference>
<dbReference type="GO" id="GO:0046872">
    <property type="term" value="F:metal ion binding"/>
    <property type="evidence" value="ECO:0007669"/>
    <property type="project" value="UniProtKB-KW"/>
</dbReference>
<dbReference type="GO" id="GO:0009098">
    <property type="term" value="P:L-leucine biosynthetic process"/>
    <property type="evidence" value="ECO:0007669"/>
    <property type="project" value="UniProtKB-UniPathway"/>
</dbReference>
<dbReference type="CDD" id="cd07940">
    <property type="entry name" value="DRE_TIM_IPMS"/>
    <property type="match status" value="1"/>
</dbReference>
<dbReference type="FunFam" id="1.10.238.260:FF:000001">
    <property type="entry name" value="2-isopropylmalate synthase"/>
    <property type="match status" value="1"/>
</dbReference>
<dbReference type="FunFam" id="3.20.20.70:FF:000010">
    <property type="entry name" value="2-isopropylmalate synthase"/>
    <property type="match status" value="1"/>
</dbReference>
<dbReference type="Gene3D" id="1.10.238.260">
    <property type="match status" value="1"/>
</dbReference>
<dbReference type="Gene3D" id="3.20.20.70">
    <property type="entry name" value="Aldolase class I"/>
    <property type="match status" value="1"/>
</dbReference>
<dbReference type="InterPro" id="IPR050073">
    <property type="entry name" value="2-IPM_HCS-like"/>
</dbReference>
<dbReference type="InterPro" id="IPR002034">
    <property type="entry name" value="AIPM/Hcit_synth_CS"/>
</dbReference>
<dbReference type="InterPro" id="IPR013785">
    <property type="entry name" value="Aldolase_TIM"/>
</dbReference>
<dbReference type="InterPro" id="IPR054948">
    <property type="entry name" value="IPMS"/>
</dbReference>
<dbReference type="InterPro" id="IPR011830">
    <property type="entry name" value="LEU1_arch"/>
</dbReference>
<dbReference type="InterPro" id="IPR054691">
    <property type="entry name" value="LeuA/HCS_post-cat"/>
</dbReference>
<dbReference type="InterPro" id="IPR000891">
    <property type="entry name" value="PYR_CT"/>
</dbReference>
<dbReference type="NCBIfam" id="NF041069">
    <property type="entry name" value="IPMS_Sufob"/>
    <property type="match status" value="1"/>
</dbReference>
<dbReference type="NCBIfam" id="TIGR02090">
    <property type="entry name" value="LEU1_arch"/>
    <property type="match status" value="1"/>
</dbReference>
<dbReference type="NCBIfam" id="NF002085">
    <property type="entry name" value="PRK00915.1-2"/>
    <property type="match status" value="1"/>
</dbReference>
<dbReference type="PANTHER" id="PTHR10277:SF9">
    <property type="entry name" value="2-ISOPROPYLMALATE SYNTHASE 1, CHLOROPLASTIC-RELATED"/>
    <property type="match status" value="1"/>
</dbReference>
<dbReference type="PANTHER" id="PTHR10277">
    <property type="entry name" value="HOMOCITRATE SYNTHASE-RELATED"/>
    <property type="match status" value="1"/>
</dbReference>
<dbReference type="Pfam" id="PF22617">
    <property type="entry name" value="HCS_D2"/>
    <property type="match status" value="1"/>
</dbReference>
<dbReference type="Pfam" id="PF00682">
    <property type="entry name" value="HMGL-like"/>
    <property type="match status" value="1"/>
</dbReference>
<dbReference type="SUPFAM" id="SSF51569">
    <property type="entry name" value="Aldolase"/>
    <property type="match status" value="1"/>
</dbReference>
<dbReference type="PROSITE" id="PS00815">
    <property type="entry name" value="AIPM_HOMOCIT_SYNTH_1"/>
    <property type="match status" value="1"/>
</dbReference>
<dbReference type="PROSITE" id="PS00816">
    <property type="entry name" value="AIPM_HOMOCIT_SYNTH_2"/>
    <property type="match status" value="1"/>
</dbReference>
<dbReference type="PROSITE" id="PS50991">
    <property type="entry name" value="PYR_CT"/>
    <property type="match status" value="1"/>
</dbReference>
<proteinExistence type="evidence at protein level"/>
<feature type="chain" id="PRO_0000448051" description="2-isopropylmalate synthase">
    <location>
        <begin position="1"/>
        <end position="386"/>
    </location>
</feature>
<feature type="domain" description="Pyruvate carboxyltransferase" evidence="3">
    <location>
        <begin position="12"/>
        <end position="265"/>
    </location>
</feature>
<feature type="binding site" evidence="2">
    <location>
        <position position="21"/>
    </location>
    <ligand>
        <name>a divalent metal cation</name>
        <dbReference type="ChEBI" id="CHEBI:60240"/>
    </ligand>
</feature>
<feature type="binding site" evidence="2">
    <location>
        <position position="203"/>
    </location>
    <ligand>
        <name>a divalent metal cation</name>
        <dbReference type="ChEBI" id="CHEBI:60240"/>
    </ligand>
</feature>
<feature type="binding site" evidence="2">
    <location>
        <position position="205"/>
    </location>
    <ligand>
        <name>a divalent metal cation</name>
        <dbReference type="ChEBI" id="CHEBI:60240"/>
    </ligand>
</feature>
<feature type="binding site" evidence="2">
    <location>
        <position position="239"/>
    </location>
    <ligand>
        <name>a divalent metal cation</name>
        <dbReference type="ChEBI" id="CHEBI:60240"/>
    </ligand>
</feature>
<comment type="function">
    <text evidence="4">Catalyzes the condensation of the acetyl group of acetyl-CoA with 3-methyl-2-oxobutanoate (2-oxoisovalerate) to form 3-carboxy-3-hydroxy-4-methylpentanoate (2-isopropylmalate). Carries out the first step of the leucine biosynthesis pathway. Also displays a low citramalate synthase activity, using pyruvate as substrate, but is unable to use 2-oxoglutarate.</text>
</comment>
<comment type="catalytic activity">
    <reaction evidence="4">
        <text>3-methyl-2-oxobutanoate + acetyl-CoA + H2O = (2S)-2-isopropylmalate + CoA + H(+)</text>
        <dbReference type="Rhea" id="RHEA:21524"/>
        <dbReference type="ChEBI" id="CHEBI:1178"/>
        <dbReference type="ChEBI" id="CHEBI:11851"/>
        <dbReference type="ChEBI" id="CHEBI:15377"/>
        <dbReference type="ChEBI" id="CHEBI:15378"/>
        <dbReference type="ChEBI" id="CHEBI:57287"/>
        <dbReference type="ChEBI" id="CHEBI:57288"/>
        <dbReference type="EC" id="2.3.3.13"/>
    </reaction>
    <physiologicalReaction direction="left-to-right" evidence="4">
        <dbReference type="Rhea" id="RHEA:21525"/>
    </physiologicalReaction>
</comment>
<comment type="cofactor">
    <cofactor evidence="2">
        <name>a divalent metal cation</name>
        <dbReference type="ChEBI" id="CHEBI:60240"/>
    </cofactor>
</comment>
<comment type="activity regulation">
    <text evidence="4">Is not inhibited by leucine.</text>
</comment>
<comment type="pathway">
    <text evidence="4">Amino-acid biosynthesis; L-leucine biosynthesis; L-leucine from 3-methyl-2-oxobutanoate: step 1/4.</text>
</comment>
<comment type="subunit">
    <text evidence="1">Homodimer.</text>
</comment>
<comment type="disruption phenotype">
    <text evidence="4">Cells lacking this gene exhibit very retarded growth in MM and the addition of isoleucine does not affect the growth of this mutant, whereas the addition of leucine appears to improve growth in MM.</text>
</comment>
<comment type="similarity">
    <text evidence="6">Belongs to the alpha-IPM synthase/homocitrate synthase family.</text>
</comment>
<protein>
    <recommendedName>
        <fullName evidence="7">2-isopropylmalate synthase</fullName>
        <shortName evidence="5">IPMS</shortName>
        <ecNumber evidence="4">2.3.3.13</ecNumber>
    </recommendedName>
    <alternativeName>
        <fullName>Alpha-isopropylmalate synthase</fullName>
        <shortName>Alpha-IPM synthase</shortName>
    </alternativeName>
</protein>
<name>LEU1_SULAC</name>
<organism>
    <name type="scientific">Sulfolobus acidocaldarius (strain ATCC 33909 / DSM 639 / JCM 8929 / NBRC 15157 / NCIMB 11770)</name>
    <dbReference type="NCBI Taxonomy" id="330779"/>
    <lineage>
        <taxon>Archaea</taxon>
        <taxon>Thermoproteota</taxon>
        <taxon>Thermoprotei</taxon>
        <taxon>Sulfolobales</taxon>
        <taxon>Sulfolobaceae</taxon>
        <taxon>Sulfolobus</taxon>
    </lineage>
</organism>
<keyword id="KW-0012">Acyltransferase</keyword>
<keyword id="KW-0028">Amino-acid biosynthesis</keyword>
<keyword id="KW-0100">Branched-chain amino acid biosynthesis</keyword>
<keyword id="KW-0432">Leucine biosynthesis</keyword>
<keyword id="KW-0479">Metal-binding</keyword>
<keyword id="KW-1185">Reference proteome</keyword>
<keyword id="KW-0808">Transferase</keyword>
<gene>
    <name evidence="8" type="ordered locus">Saci_0940</name>
</gene>
<sequence>MGCLFSVNSKKVRIFDTTLRDGEQAPGIDLTVDQKIRVAKRLAELGVDVIEAGFPASSDGEFEATKKILSEIGDQVEVTGLSRSVKQDIDRTIDTGLSSIHIFIATSDIHLKYKLKMTREEVLNRIYESVRYAKDHGLIVEYSPEDATRSDEEFLLKAVKTAIDAGADRINIPDTVGVMHPFKFYDLISKIVKVTGDKIVSVHCHNDFGLATANSIAGVMAGARQVHVTVNGIGERAGNASLEEVVMSLKKLLGYDVGVRTYLLYEVSRYVAELTGVPVPYFKAIVGENAFGHEAGIHVHGVIENPMTYEPISPEEVGNFRRIALGKHSGIHGLKRLLEEQGIFLDDTQLREVLKEIKSLAEAGNKVTSADAKAIAIKVINKKITA</sequence>
<accession>Q4JA78</accession>
<reference key="1">
    <citation type="journal article" date="2005" name="J. Bacteriol.">
        <title>The genome of Sulfolobus acidocaldarius, a model organism of the Crenarchaeota.</title>
        <authorList>
            <person name="Chen L."/>
            <person name="Bruegger K."/>
            <person name="Skovgaard M."/>
            <person name="Redder P."/>
            <person name="She Q."/>
            <person name="Torarinsson E."/>
            <person name="Greve B."/>
            <person name="Awayez M."/>
            <person name="Zibat A."/>
            <person name="Klenk H.-P."/>
            <person name="Garrett R.A."/>
        </authorList>
    </citation>
    <scope>NUCLEOTIDE SEQUENCE [LARGE SCALE GENOMIC DNA]</scope>
    <source>
        <strain>ATCC 33909 / DSM 639 / JCM 8929 / NBRC 15157 / NCIMB 11770</strain>
    </source>
</reference>
<reference key="2">
    <citation type="journal article" date="2020" name="FEBS Lett.">
        <title>Biochemical characterization of archaeal homocitrate synthase from Sulfolobus acidocaldarius.</title>
        <authorList>
            <person name="Suzuki T."/>
            <person name="Akiyama N."/>
            <person name="Yoshida A."/>
            <person name="Tomita T."/>
            <person name="Lassak K."/>
            <person name="Haurat M.F."/>
            <person name="Okada T."/>
            <person name="Takahashi K."/>
            <person name="Albers S.V."/>
            <person name="Kuzuyama T."/>
            <person name="Nishiyama M."/>
        </authorList>
    </citation>
    <scope>FUNCTION</scope>
    <scope>CATALYTIC ACTIVITY</scope>
    <scope>SUBSTRATE SPECIFICITY</scope>
    <scope>ACTIVITY REGULATION</scope>
    <scope>PATHWAY</scope>
    <scope>DISRUPTION PHENOTYPE</scope>
</reference>
<evidence type="ECO:0000250" key="1">
    <source>
        <dbReference type="UniProtKB" id="P9WQB3"/>
    </source>
</evidence>
<evidence type="ECO:0000250" key="2">
    <source>
        <dbReference type="UniProtKB" id="Q9JZG1"/>
    </source>
</evidence>
<evidence type="ECO:0000255" key="3">
    <source>
        <dbReference type="PROSITE-ProRule" id="PRU01151"/>
    </source>
</evidence>
<evidence type="ECO:0000269" key="4">
    <source>
    </source>
</evidence>
<evidence type="ECO:0000303" key="5">
    <source>
    </source>
</evidence>
<evidence type="ECO:0000305" key="6"/>
<evidence type="ECO:0000305" key="7">
    <source>
    </source>
</evidence>
<evidence type="ECO:0000312" key="8">
    <source>
        <dbReference type="EMBL" id="AAY80302.1"/>
    </source>
</evidence>